<keyword id="KW-0007">Acetylation</keyword>
<keyword id="KW-0143">Chaperone</keyword>
<keyword id="KW-1185">Reference proteome</keyword>
<sequence length="503" mass="56042">MAAQALALLREVSRLEAPLEELRALQSLLQSVPLSELREQAAELRLGPLFSLLNENHREQTTLCVSILERLLQALEPVHVARNLRVDLQRGLTHPNDSVKILTLSQVGRIVENSDAVTEILNNAELLKQIVYCIGGENLSVAKTAIKSLSRISLTQAGLEALFESNLLDDLKSVMKTNDIVRYRVYELIVEISSVSPESLNCCTTSGLVTQLLRELTGEDVLVRATCIEMVTSLACTHHGRQYLAQEGVIDQISNIIVGADADPFSSFYLPGFVKFFGNLAIMDSPQQICERYPIFMEKVFEMTESQDPTMIGVAVDTIGILGSNVEGKQVLQKTGTRFERLLMKIGYQAKNASTELKIRCLDALSSLFYLPPEQTDDLLRMTESWFSSLSRDPLELFRGISNQPFPELHCAALKVFTAIANQPWAQKLMFNSPGFVEYVMDRSVEHDKASKDAKYELVKALANSKTIAEIFGNPNYLRLRTYLSEGPYYVKPISTTAVEGAE</sequence>
<name>PSMD5_BOVIN</name>
<evidence type="ECO:0000250" key="1"/>
<evidence type="ECO:0000250" key="2">
    <source>
        <dbReference type="UniProtKB" id="Q16401"/>
    </source>
</evidence>
<evidence type="ECO:0000305" key="3"/>
<organism>
    <name type="scientific">Bos taurus</name>
    <name type="common">Bovine</name>
    <dbReference type="NCBI Taxonomy" id="9913"/>
    <lineage>
        <taxon>Eukaryota</taxon>
        <taxon>Metazoa</taxon>
        <taxon>Chordata</taxon>
        <taxon>Craniata</taxon>
        <taxon>Vertebrata</taxon>
        <taxon>Euteleostomi</taxon>
        <taxon>Mammalia</taxon>
        <taxon>Eutheria</taxon>
        <taxon>Laurasiatheria</taxon>
        <taxon>Artiodactyla</taxon>
        <taxon>Ruminantia</taxon>
        <taxon>Pecora</taxon>
        <taxon>Bovidae</taxon>
        <taxon>Bovinae</taxon>
        <taxon>Bos</taxon>
    </lineage>
</organism>
<comment type="function">
    <text evidence="1">Acts as a chaperone during the assembly of the 26S proteasome, specifically of the base subcomplex of the PA700/19S regulatory complex (RC). In the initial step of the base subcomplex assembly is part of an intermediate PSMD5:PSMC2:PSMC1:PSMD2 module which probably assembles with a PSMD10:PSMC4:PSMC5:PAAF1 module followed by dissociation of PSMD5 (By similarity).</text>
</comment>
<comment type="subunit">
    <text evidence="1">Interacts with PSMC1, PSMC2, PSMD1 and PSMD6. Part of transient complex containing PSMD5, PSMC2, PSMC1 and PSMD2 formed during the assembly of the 26S proteasome (By similarity).</text>
</comment>
<comment type="domain">
    <text>Rich in dileucine repeats, which have been implicated in trafficking of a variety of transmembrane proteins.</text>
</comment>
<comment type="similarity">
    <text evidence="3">Belongs to the proteasome subunit S5B/HSM3 family.</text>
</comment>
<protein>
    <recommendedName>
        <fullName>26S proteasome non-ATPase regulatory subunit 5</fullName>
    </recommendedName>
</protein>
<proteinExistence type="evidence at transcript level"/>
<dbReference type="EMBL" id="BC120300">
    <property type="protein sequence ID" value="AAI20301.1"/>
    <property type="molecule type" value="mRNA"/>
</dbReference>
<dbReference type="RefSeq" id="NP_001069161.1">
    <property type="nucleotide sequence ID" value="NM_001075693.1"/>
</dbReference>
<dbReference type="SMR" id="Q0P5A6"/>
<dbReference type="FunCoup" id="Q0P5A6">
    <property type="interactions" value="4116"/>
</dbReference>
<dbReference type="STRING" id="9913.ENSBTAP00000022548"/>
<dbReference type="PaxDb" id="9913-ENSBTAP00000022548"/>
<dbReference type="GeneID" id="515021"/>
<dbReference type="KEGG" id="bta:515021"/>
<dbReference type="CTD" id="5711"/>
<dbReference type="eggNOG" id="KOG4413">
    <property type="taxonomic scope" value="Eukaryota"/>
</dbReference>
<dbReference type="HOGENOM" id="CLU_043710_0_0_1"/>
<dbReference type="InParanoid" id="Q0P5A6"/>
<dbReference type="OrthoDB" id="10250600at2759"/>
<dbReference type="Proteomes" id="UP000009136">
    <property type="component" value="Unplaced"/>
</dbReference>
<dbReference type="GO" id="GO:0005829">
    <property type="term" value="C:cytosol"/>
    <property type="evidence" value="ECO:0000304"/>
    <property type="project" value="Reactome"/>
</dbReference>
<dbReference type="GO" id="GO:0022624">
    <property type="term" value="C:proteasome accessory complex"/>
    <property type="evidence" value="ECO:0000250"/>
    <property type="project" value="UniProtKB"/>
</dbReference>
<dbReference type="GO" id="GO:0043248">
    <property type="term" value="P:proteasome assembly"/>
    <property type="evidence" value="ECO:0007669"/>
    <property type="project" value="InterPro"/>
</dbReference>
<dbReference type="FunFam" id="1.25.10.10:FF:000208">
    <property type="entry name" value="26S proteasome non-ATPase regulatory subunit 5"/>
    <property type="match status" value="1"/>
</dbReference>
<dbReference type="FunFam" id="1.25.10.10:FF:000261">
    <property type="entry name" value="26S proteasome non-ATPase regulatory subunit 5"/>
    <property type="match status" value="1"/>
</dbReference>
<dbReference type="Gene3D" id="1.25.10.10">
    <property type="entry name" value="Leucine-rich Repeat Variant"/>
    <property type="match status" value="2"/>
</dbReference>
<dbReference type="InterPro" id="IPR011989">
    <property type="entry name" value="ARM-like"/>
</dbReference>
<dbReference type="InterPro" id="IPR016024">
    <property type="entry name" value="ARM-type_fold"/>
</dbReference>
<dbReference type="InterPro" id="IPR019538">
    <property type="entry name" value="PSMD5"/>
</dbReference>
<dbReference type="PANTHER" id="PTHR13554:SF10">
    <property type="entry name" value="26S PROTEASOME NON-ATPASE REGULATORY SUBUNIT 5"/>
    <property type="match status" value="1"/>
</dbReference>
<dbReference type="PANTHER" id="PTHR13554">
    <property type="entry name" value="26S PROTEASOME NON-ATPASE REGULATORY SUBUNIT 5-RELATED"/>
    <property type="match status" value="1"/>
</dbReference>
<dbReference type="Pfam" id="PF10508">
    <property type="entry name" value="Proteasom_PSMB"/>
    <property type="match status" value="1"/>
</dbReference>
<dbReference type="SUPFAM" id="SSF48371">
    <property type="entry name" value="ARM repeat"/>
    <property type="match status" value="1"/>
</dbReference>
<accession>Q0P5A6</accession>
<gene>
    <name type="primary">PSMD5</name>
</gene>
<reference key="1">
    <citation type="submission" date="2006-08" db="EMBL/GenBank/DDBJ databases">
        <authorList>
            <consortium name="NIH - Mammalian Gene Collection (MGC) project"/>
        </authorList>
    </citation>
    <scope>NUCLEOTIDE SEQUENCE [LARGE SCALE MRNA]</scope>
    <source>
        <strain>Hereford</strain>
        <tissue>Placenta</tissue>
    </source>
</reference>
<feature type="initiator methionine" description="Removed" evidence="2">
    <location>
        <position position="1"/>
    </location>
</feature>
<feature type="chain" id="PRO_0000283069" description="26S proteasome non-ATPase regulatory subunit 5">
    <location>
        <begin position="2"/>
        <end position="503"/>
    </location>
</feature>
<feature type="modified residue" description="N-acetylalanine" evidence="2">
    <location>
        <position position="2"/>
    </location>
</feature>